<accession>Q934G3</accession>
<accession>E0SDD0</accession>
<name>KDGM_DICD3</name>
<evidence type="ECO:0000269" key="1">
    <source>
    </source>
</evidence>
<evidence type="ECO:0000305" key="2"/>
<evidence type="ECO:0007829" key="3">
    <source>
        <dbReference type="PDB" id="4FQE"/>
    </source>
</evidence>
<evidence type="ECO:0007829" key="4">
    <source>
        <dbReference type="PDB" id="4PR7"/>
    </source>
</evidence>
<comment type="function">
    <text>Porin specific for oligogalacturonides. Also required for full virulence.</text>
</comment>
<comment type="subunit">
    <text evidence="2">Monomer.</text>
</comment>
<comment type="subcellular location">
    <subcellularLocation>
        <location>Cell outer membrane</location>
    </subcellularLocation>
</comment>
<comment type="induction">
    <text>Induced by pectin or pectin derivatives. Controlled by KdgR, ExuR, PecS and catabolite repression via CRP.</text>
</comment>
<comment type="similarity">
    <text evidence="2">Belongs to the oligogalacturonate-specific porin KdgM (TC 1.B.35) family.</text>
</comment>
<dbReference type="EMBL" id="AJ320226">
    <property type="protein sequence ID" value="CAC86224.1"/>
    <property type="molecule type" value="Genomic_DNA"/>
</dbReference>
<dbReference type="EMBL" id="CP002038">
    <property type="protein sequence ID" value="ADM98622.1"/>
    <property type="molecule type" value="Genomic_DNA"/>
</dbReference>
<dbReference type="RefSeq" id="WP_013318071.1">
    <property type="nucleotide sequence ID" value="NC_014500.1"/>
</dbReference>
<dbReference type="PDB" id="4FQE">
    <property type="method" value="X-ray"/>
    <property type="resolution" value="1.93 A"/>
    <property type="chains" value="A=21-236"/>
</dbReference>
<dbReference type="PDB" id="4PR7">
    <property type="method" value="X-ray"/>
    <property type="resolution" value="2.10 A"/>
    <property type="chains" value="A=21-236"/>
</dbReference>
<dbReference type="PDBsum" id="4FQE"/>
<dbReference type="PDBsum" id="4PR7"/>
<dbReference type="SMR" id="Q934G3"/>
<dbReference type="STRING" id="198628.Dda3937_03362"/>
<dbReference type="TCDB" id="1.B.35.1.1">
    <property type="family name" value="the oligogalacturonate-specific porin (kdgm) family"/>
</dbReference>
<dbReference type="KEGG" id="ddd:Dda3937_03362"/>
<dbReference type="PATRIC" id="fig|198628.6.peg.2400"/>
<dbReference type="eggNOG" id="COG1452">
    <property type="taxonomic scope" value="Bacteria"/>
</dbReference>
<dbReference type="HOGENOM" id="CLU_081853_0_0_6"/>
<dbReference type="OrthoDB" id="5817226at2"/>
<dbReference type="EvolutionaryTrace" id="Q934G3"/>
<dbReference type="Proteomes" id="UP000006859">
    <property type="component" value="Chromosome"/>
</dbReference>
<dbReference type="GO" id="GO:0009279">
    <property type="term" value="C:cell outer membrane"/>
    <property type="evidence" value="ECO:0000315"/>
    <property type="project" value="ASAP"/>
</dbReference>
<dbReference type="GO" id="GO:0046930">
    <property type="term" value="C:pore complex"/>
    <property type="evidence" value="ECO:0007669"/>
    <property type="project" value="UniProtKB-KW"/>
</dbReference>
<dbReference type="GO" id="GO:0015288">
    <property type="term" value="F:porin activity"/>
    <property type="evidence" value="ECO:0007669"/>
    <property type="project" value="UniProtKB-KW"/>
</dbReference>
<dbReference type="GO" id="GO:0005244">
    <property type="term" value="F:voltage-gated monoatomic ion channel activity"/>
    <property type="evidence" value="ECO:0000315"/>
    <property type="project" value="ASAP"/>
</dbReference>
<dbReference type="GO" id="GO:0015772">
    <property type="term" value="P:oligosaccharide transport"/>
    <property type="evidence" value="ECO:0007669"/>
    <property type="project" value="TreeGrafter"/>
</dbReference>
<dbReference type="GO" id="GO:0045488">
    <property type="term" value="P:pectin metabolic process"/>
    <property type="evidence" value="ECO:0000315"/>
    <property type="project" value="ASAP"/>
</dbReference>
<dbReference type="Gene3D" id="2.40.160.40">
    <property type="entry name" value="monomeric porin ompg"/>
    <property type="match status" value="1"/>
</dbReference>
<dbReference type="InterPro" id="IPR053713">
    <property type="entry name" value="Bact_OM_Channel_sf"/>
</dbReference>
<dbReference type="InterPro" id="IPR009331">
    <property type="entry name" value="Oligogalacturonate-sp_porin"/>
</dbReference>
<dbReference type="PANTHER" id="PTHR38105:SF5">
    <property type="entry name" value="OUTER MEMBRANE PROTEIN"/>
    <property type="match status" value="1"/>
</dbReference>
<dbReference type="PANTHER" id="PTHR38105">
    <property type="entry name" value="OUTER MEMBRANE PROTEIN-RELATED-RELATED"/>
    <property type="match status" value="1"/>
</dbReference>
<dbReference type="Pfam" id="PF06178">
    <property type="entry name" value="KdgM"/>
    <property type="match status" value="1"/>
</dbReference>
<dbReference type="SUPFAM" id="SSF56935">
    <property type="entry name" value="Porins"/>
    <property type="match status" value="1"/>
</dbReference>
<gene>
    <name type="primary">kdgM</name>
    <name type="ordered locus">Dda3937_03362</name>
</gene>
<sequence>MKIKLLTLAVASLVSVNALAVSIDYRHEMQDTAQAGHKDRLLISHRFANGFGLSSEVKWAQSSADKTPNKPFNEQVSNGTEVVASYVYKFNSVFSIEPGFSLESGSSNNNYRPYLRGRANVTDDLSVALRYRPYFKRNSGNIGKDNTMDKGYTLTGNIDYTFLKDYTIGYELEYKKGTSGKTILSDNDDYDITHNVKLSYKWDKNWKPYVEVGNVSGSETTDERQTRYRVGVQYSF</sequence>
<organism>
    <name type="scientific">Dickeya dadantii (strain 3937)</name>
    <name type="common">Erwinia chrysanthemi (strain 3937)</name>
    <dbReference type="NCBI Taxonomy" id="198628"/>
    <lineage>
        <taxon>Bacteria</taxon>
        <taxon>Pseudomonadati</taxon>
        <taxon>Pseudomonadota</taxon>
        <taxon>Gammaproteobacteria</taxon>
        <taxon>Enterobacterales</taxon>
        <taxon>Pectobacteriaceae</taxon>
        <taxon>Dickeya</taxon>
    </lineage>
</organism>
<reference key="1">
    <citation type="journal article" date="2002" name="J. Biol. Chem.">
        <title>The oligogalacturonate-specific porin KdgM of Erwinia chrysanthemi belongs to a new porin family.</title>
        <authorList>
            <person name="Blot N."/>
            <person name="Berrier C."/>
            <person name="Hugouvieux-Cotte-Pattat N."/>
            <person name="Ghazi A."/>
            <person name="Condemine G."/>
        </authorList>
    </citation>
    <scope>NUCLEOTIDE SEQUENCE [GENOMIC DNA]</scope>
    <scope>PROTEIN SEQUENCE OF N-TERMINUS</scope>
    <scope>CHARACTERIZATION</scope>
    <source>
        <strain>3937</strain>
    </source>
</reference>
<reference key="2">
    <citation type="journal article" date="2011" name="J. Bacteriol.">
        <title>Genome sequence of the plant-pathogenic bacterium Dickeya dadantii 3937.</title>
        <authorList>
            <person name="Glasner J.D."/>
            <person name="Yang C.H."/>
            <person name="Reverchon S."/>
            <person name="Hugouvieux-Cotte-Pattat N."/>
            <person name="Condemine G."/>
            <person name="Bohin J.P."/>
            <person name="Van Gijsegem F."/>
            <person name="Yang S."/>
            <person name="Franza T."/>
            <person name="Expert D."/>
            <person name="Plunkett G. III"/>
            <person name="San Francisco M.J."/>
            <person name="Charkowski A.O."/>
            <person name="Py B."/>
            <person name="Bell K."/>
            <person name="Rauscher L."/>
            <person name="Rodriguez-Palenzuela P."/>
            <person name="Toussaint A."/>
            <person name="Holeva M.C."/>
            <person name="He S.Y."/>
            <person name="Douet V."/>
            <person name="Boccara M."/>
            <person name="Blanco C."/>
            <person name="Toth I."/>
            <person name="Anderson B.D."/>
            <person name="Biehl B.S."/>
            <person name="Mau B."/>
            <person name="Flynn S.M."/>
            <person name="Barras F."/>
            <person name="Lindeberg M."/>
            <person name="Birch P.R."/>
            <person name="Tsuyumu S."/>
            <person name="Shi X."/>
            <person name="Hibbing M."/>
            <person name="Yap M.N."/>
            <person name="Carpentier M."/>
            <person name="Dassa E."/>
            <person name="Umehara M."/>
            <person name="Kim J.F."/>
            <person name="Rusch M."/>
            <person name="Soni P."/>
            <person name="Mayhew G.F."/>
            <person name="Fouts D.E."/>
            <person name="Gill S.R."/>
            <person name="Blattner F.R."/>
            <person name="Keen N.T."/>
            <person name="Perna N.T."/>
        </authorList>
    </citation>
    <scope>NUCLEOTIDE SEQUENCE [LARGE SCALE GENOMIC DNA]</scope>
    <source>
        <strain>3937</strain>
    </source>
</reference>
<protein>
    <recommendedName>
        <fullName>Oligogalacturonate-specific porin KdgM</fullName>
    </recommendedName>
</protein>
<proteinExistence type="evidence at protein level"/>
<keyword id="KW-0002">3D-structure</keyword>
<keyword id="KW-0998">Cell outer membrane</keyword>
<keyword id="KW-0903">Direct protein sequencing</keyword>
<keyword id="KW-0406">Ion transport</keyword>
<keyword id="KW-0472">Membrane</keyword>
<keyword id="KW-0626">Porin</keyword>
<keyword id="KW-1185">Reference proteome</keyword>
<keyword id="KW-0732">Signal</keyword>
<keyword id="KW-0762">Sugar transport</keyword>
<keyword id="KW-0812">Transmembrane</keyword>
<keyword id="KW-1134">Transmembrane beta strand</keyword>
<keyword id="KW-0813">Transport</keyword>
<keyword id="KW-0843">Virulence</keyword>
<feature type="signal peptide" evidence="1">
    <location>
        <begin position="1"/>
        <end position="20"/>
    </location>
</feature>
<feature type="chain" id="PRO_0000016600" description="Oligogalacturonate-specific porin KdgM">
    <location>
        <begin position="21"/>
        <end position="236"/>
    </location>
</feature>
<feature type="strand" evidence="3">
    <location>
        <begin position="22"/>
        <end position="29"/>
    </location>
</feature>
<feature type="strand" evidence="3">
    <location>
        <begin position="37"/>
        <end position="46"/>
    </location>
</feature>
<feature type="strand" evidence="3">
    <location>
        <begin position="50"/>
        <end position="61"/>
    </location>
</feature>
<feature type="strand" evidence="3">
    <location>
        <begin position="77"/>
        <end position="86"/>
    </location>
</feature>
<feature type="strand" evidence="3">
    <location>
        <begin position="88"/>
        <end position="107"/>
    </location>
</feature>
<feature type="strand" evidence="4">
    <location>
        <begin position="109"/>
        <end position="111"/>
    </location>
</feature>
<feature type="strand" evidence="3">
    <location>
        <begin position="114"/>
        <end position="136"/>
    </location>
</feature>
<feature type="strand" evidence="3">
    <location>
        <begin position="151"/>
        <end position="162"/>
    </location>
</feature>
<feature type="turn" evidence="3">
    <location>
        <begin position="163"/>
        <end position="165"/>
    </location>
</feature>
<feature type="strand" evidence="3">
    <location>
        <begin position="166"/>
        <end position="177"/>
    </location>
</feature>
<feature type="strand" evidence="3">
    <location>
        <begin position="191"/>
        <end position="200"/>
    </location>
</feature>
<feature type="strand" evidence="3">
    <location>
        <begin position="203"/>
        <end position="216"/>
    </location>
</feature>
<feature type="strand" evidence="3">
    <location>
        <begin position="225"/>
        <end position="235"/>
    </location>
</feature>